<evidence type="ECO:0000250" key="1"/>
<evidence type="ECO:0000256" key="2">
    <source>
        <dbReference type="SAM" id="MobiDB-lite"/>
    </source>
</evidence>
<evidence type="ECO:0000305" key="3"/>
<accession>Q01JG2</accession>
<accession>A2XVW7</accession>
<sequence>MMSSAPETFSLDHLSQHQQQQPPPLAEQEQLCYVHCNFCDTILAVGVPCSSLFKTVTVRCGHCANLLSVNLRGLLLPAAASTANQLPFGQALLSPTSPHGLLDEVPSFQAPASLMTEQASPNVSSITSSNSSCANNAPATSMASAANKATQREPQQPKNAPSANRTSEKRQRVPSAYNRFIKDEIQRIKASNPDITHREAFSAAAKNWAHFPHIHFGLMPDQGLKKTGIQSQDGAGECMLFKDGLYAAAAAAAAATAASSMGVTPF</sequence>
<reference key="1">
    <citation type="journal article" date="2002" name="Nature">
        <title>Sequence and analysis of rice chromosome 4.</title>
        <authorList>
            <person name="Feng Q."/>
            <person name="Zhang Y."/>
            <person name="Hao P."/>
            <person name="Wang S."/>
            <person name="Fu G."/>
            <person name="Huang Y."/>
            <person name="Li Y."/>
            <person name="Zhu J."/>
            <person name="Liu Y."/>
            <person name="Hu X."/>
            <person name="Jia P."/>
            <person name="Zhang Y."/>
            <person name="Zhao Q."/>
            <person name="Ying K."/>
            <person name="Yu S."/>
            <person name="Tang Y."/>
            <person name="Weng Q."/>
            <person name="Zhang L."/>
            <person name="Lu Y."/>
            <person name="Mu J."/>
            <person name="Lu Y."/>
            <person name="Zhang L.S."/>
            <person name="Yu Z."/>
            <person name="Fan D."/>
            <person name="Liu X."/>
            <person name="Lu T."/>
            <person name="Li C."/>
            <person name="Wu Y."/>
            <person name="Sun T."/>
            <person name="Lei H."/>
            <person name="Li T."/>
            <person name="Hu H."/>
            <person name="Guan J."/>
            <person name="Wu M."/>
            <person name="Zhang R."/>
            <person name="Zhou B."/>
            <person name="Chen Z."/>
            <person name="Chen L."/>
            <person name="Jin Z."/>
            <person name="Wang R."/>
            <person name="Yin H."/>
            <person name="Cai Z."/>
            <person name="Ren S."/>
            <person name="Lv G."/>
            <person name="Gu W."/>
            <person name="Zhu G."/>
            <person name="Tu Y."/>
            <person name="Jia J."/>
            <person name="Zhang Y."/>
            <person name="Chen J."/>
            <person name="Kang H."/>
            <person name="Chen X."/>
            <person name="Shao C."/>
            <person name="Sun Y."/>
            <person name="Hu Q."/>
            <person name="Zhang X."/>
            <person name="Zhang W."/>
            <person name="Wang L."/>
            <person name="Ding C."/>
            <person name="Sheng H."/>
            <person name="Gu J."/>
            <person name="Chen S."/>
            <person name="Ni L."/>
            <person name="Zhu F."/>
            <person name="Chen W."/>
            <person name="Lan L."/>
            <person name="Lai Y."/>
            <person name="Cheng Z."/>
            <person name="Gu M."/>
            <person name="Jiang J."/>
            <person name="Li J."/>
            <person name="Hong G."/>
            <person name="Xue Y."/>
            <person name="Han B."/>
        </authorList>
    </citation>
    <scope>NUCLEOTIDE SEQUENCE [LARGE SCALE GENOMIC DNA]</scope>
    <source>
        <strain>cv. Guang-Lu-Ai No.4</strain>
    </source>
</reference>
<reference key="2">
    <citation type="journal article" date="2005" name="PLoS Biol.">
        <title>The genomes of Oryza sativa: a history of duplications.</title>
        <authorList>
            <person name="Yu J."/>
            <person name="Wang J."/>
            <person name="Lin W."/>
            <person name="Li S."/>
            <person name="Li H."/>
            <person name="Zhou J."/>
            <person name="Ni P."/>
            <person name="Dong W."/>
            <person name="Hu S."/>
            <person name="Zeng C."/>
            <person name="Zhang J."/>
            <person name="Zhang Y."/>
            <person name="Li R."/>
            <person name="Xu Z."/>
            <person name="Li S."/>
            <person name="Li X."/>
            <person name="Zheng H."/>
            <person name="Cong L."/>
            <person name="Lin L."/>
            <person name="Yin J."/>
            <person name="Geng J."/>
            <person name="Li G."/>
            <person name="Shi J."/>
            <person name="Liu J."/>
            <person name="Lv H."/>
            <person name="Li J."/>
            <person name="Wang J."/>
            <person name="Deng Y."/>
            <person name="Ran L."/>
            <person name="Shi X."/>
            <person name="Wang X."/>
            <person name="Wu Q."/>
            <person name="Li C."/>
            <person name="Ren X."/>
            <person name="Wang J."/>
            <person name="Wang X."/>
            <person name="Li D."/>
            <person name="Liu D."/>
            <person name="Zhang X."/>
            <person name="Ji Z."/>
            <person name="Zhao W."/>
            <person name="Sun Y."/>
            <person name="Zhang Z."/>
            <person name="Bao J."/>
            <person name="Han Y."/>
            <person name="Dong L."/>
            <person name="Ji J."/>
            <person name="Chen P."/>
            <person name="Wu S."/>
            <person name="Liu J."/>
            <person name="Xiao Y."/>
            <person name="Bu D."/>
            <person name="Tan J."/>
            <person name="Yang L."/>
            <person name="Ye C."/>
            <person name="Zhang J."/>
            <person name="Xu J."/>
            <person name="Zhou Y."/>
            <person name="Yu Y."/>
            <person name="Zhang B."/>
            <person name="Zhuang S."/>
            <person name="Wei H."/>
            <person name="Liu B."/>
            <person name="Lei M."/>
            <person name="Yu H."/>
            <person name="Li Y."/>
            <person name="Xu H."/>
            <person name="Wei S."/>
            <person name="He X."/>
            <person name="Fang L."/>
            <person name="Zhang Z."/>
            <person name="Zhang Y."/>
            <person name="Huang X."/>
            <person name="Su Z."/>
            <person name="Tong W."/>
            <person name="Li J."/>
            <person name="Tong Z."/>
            <person name="Li S."/>
            <person name="Ye J."/>
            <person name="Wang L."/>
            <person name="Fang L."/>
            <person name="Lei T."/>
            <person name="Chen C.-S."/>
            <person name="Chen H.-C."/>
            <person name="Xu Z."/>
            <person name="Li H."/>
            <person name="Huang H."/>
            <person name="Zhang F."/>
            <person name="Xu H."/>
            <person name="Li N."/>
            <person name="Zhao C."/>
            <person name="Li S."/>
            <person name="Dong L."/>
            <person name="Huang Y."/>
            <person name="Li L."/>
            <person name="Xi Y."/>
            <person name="Qi Q."/>
            <person name="Li W."/>
            <person name="Zhang B."/>
            <person name="Hu W."/>
            <person name="Zhang Y."/>
            <person name="Tian X."/>
            <person name="Jiao Y."/>
            <person name="Liang X."/>
            <person name="Jin J."/>
            <person name="Gao L."/>
            <person name="Zheng W."/>
            <person name="Hao B."/>
            <person name="Liu S.-M."/>
            <person name="Wang W."/>
            <person name="Yuan L."/>
            <person name="Cao M."/>
            <person name="McDermott J."/>
            <person name="Samudrala R."/>
            <person name="Wang J."/>
            <person name="Wong G.K.-S."/>
            <person name="Yang H."/>
        </authorList>
    </citation>
    <scope>NUCLEOTIDE SEQUENCE [LARGE SCALE GENOMIC DNA]</scope>
    <source>
        <strain>cv. 93-11</strain>
    </source>
</reference>
<feature type="chain" id="PRO_0000308698" description="Protein YABBY 5">
    <location>
        <begin position="1"/>
        <end position="266"/>
    </location>
</feature>
<feature type="zinc finger region" description="C4-type">
    <location>
        <begin position="36"/>
        <end position="63"/>
    </location>
</feature>
<feature type="region of interest" description="Disordered" evidence="2">
    <location>
        <begin position="1"/>
        <end position="22"/>
    </location>
</feature>
<feature type="region of interest" description="Disordered" evidence="2">
    <location>
        <begin position="119"/>
        <end position="174"/>
    </location>
</feature>
<feature type="compositionally biased region" description="Low complexity" evidence="2">
    <location>
        <begin position="119"/>
        <end position="141"/>
    </location>
</feature>
<feature type="compositionally biased region" description="Polar residues" evidence="2">
    <location>
        <begin position="142"/>
        <end position="165"/>
    </location>
</feature>
<gene>
    <name type="primary">YAB5</name>
    <name type="ORF">H0502G05.4</name>
    <name type="ORF">OsI_016210</name>
</gene>
<protein>
    <recommendedName>
        <fullName>Protein YABBY 5</fullName>
    </recommendedName>
    <alternativeName>
        <fullName>OsYAB3</fullName>
    </alternativeName>
    <alternativeName>
        <fullName>OsYABBY5</fullName>
    </alternativeName>
</protein>
<dbReference type="EMBL" id="CR855171">
    <property type="protein sequence ID" value="CAH67113.1"/>
    <property type="status" value="ALT_INIT"/>
    <property type="molecule type" value="Genomic_DNA"/>
</dbReference>
<dbReference type="EMBL" id="CM000129">
    <property type="protein sequence ID" value="EAY94977.1"/>
    <property type="status" value="ALT_INIT"/>
    <property type="molecule type" value="Genomic_DNA"/>
</dbReference>
<dbReference type="SMR" id="Q01JG2"/>
<dbReference type="STRING" id="39946.Q01JG2"/>
<dbReference type="EnsemblPlants" id="OsIR64_04g0020480.01">
    <property type="protein sequence ID" value="OsIR64_04g0020480.01"/>
    <property type="gene ID" value="OsIR64_04g0020480"/>
</dbReference>
<dbReference type="EnsemblPlants" id="OsKYG_04g0020820.01">
    <property type="protein sequence ID" value="OsKYG_04g0020820.01"/>
    <property type="gene ID" value="OsKYG_04g0020820"/>
</dbReference>
<dbReference type="EnsemblPlants" id="OsLaMu_04g0021490.01">
    <property type="protein sequence ID" value="OsLaMu_04g0021490.01"/>
    <property type="gene ID" value="OsLaMu_04g0021490"/>
</dbReference>
<dbReference type="EnsemblPlants" id="OsLima_04g0020980.01">
    <property type="protein sequence ID" value="OsLima_04g0020980.01"/>
    <property type="gene ID" value="OsLima_04g0020980"/>
</dbReference>
<dbReference type="EnsemblPlants" id="OsLiXu_04g0021310.01">
    <property type="protein sequence ID" value="OsLiXu_04g0021310.01"/>
    <property type="gene ID" value="OsLiXu_04g0021310"/>
</dbReference>
<dbReference type="EnsemblPlants" id="OsMH63_04G021820_01">
    <property type="protein sequence ID" value="OsMH63_04G021820_01"/>
    <property type="gene ID" value="OsMH63_04G021820"/>
</dbReference>
<dbReference type="EnsemblPlants" id="OsPr106_04g0021670.01">
    <property type="protein sequence ID" value="OsPr106_04g0021670.01"/>
    <property type="gene ID" value="OsPr106_04g0021670"/>
</dbReference>
<dbReference type="EnsemblPlants" id="OsZS97_04G021850_01">
    <property type="protein sequence ID" value="OsZS97_04G021850_01"/>
    <property type="gene ID" value="OsZS97_04G021850"/>
</dbReference>
<dbReference type="Gramene" id="OsIR64_04g0020480.01">
    <property type="protein sequence ID" value="OsIR64_04g0020480.01"/>
    <property type="gene ID" value="OsIR64_04g0020480"/>
</dbReference>
<dbReference type="Gramene" id="OsKYG_04g0020820.01">
    <property type="protein sequence ID" value="OsKYG_04g0020820.01"/>
    <property type="gene ID" value="OsKYG_04g0020820"/>
</dbReference>
<dbReference type="Gramene" id="OsLaMu_04g0021490.01">
    <property type="protein sequence ID" value="OsLaMu_04g0021490.01"/>
    <property type="gene ID" value="OsLaMu_04g0021490"/>
</dbReference>
<dbReference type="Gramene" id="OsLima_04g0020980.01">
    <property type="protein sequence ID" value="OsLima_04g0020980.01"/>
    <property type="gene ID" value="OsLima_04g0020980"/>
</dbReference>
<dbReference type="Gramene" id="OsLiXu_04g0021310.01">
    <property type="protein sequence ID" value="OsLiXu_04g0021310.01"/>
    <property type="gene ID" value="OsLiXu_04g0021310"/>
</dbReference>
<dbReference type="Gramene" id="OsMH63_04G021820_01">
    <property type="protein sequence ID" value="OsMH63_04G021820_01"/>
    <property type="gene ID" value="OsMH63_04G021820"/>
</dbReference>
<dbReference type="Gramene" id="OsPr106_04g0021670.01">
    <property type="protein sequence ID" value="OsPr106_04g0021670.01"/>
    <property type="gene ID" value="OsPr106_04g0021670"/>
</dbReference>
<dbReference type="Gramene" id="OsZS97_04G021850_01">
    <property type="protein sequence ID" value="OsZS97_04G021850_01"/>
    <property type="gene ID" value="OsZS97_04G021850"/>
</dbReference>
<dbReference type="HOGENOM" id="CLU_071156_1_0_1"/>
<dbReference type="Proteomes" id="UP000007015">
    <property type="component" value="Chromosome 4"/>
</dbReference>
<dbReference type="GO" id="GO:0005634">
    <property type="term" value="C:nucleus"/>
    <property type="evidence" value="ECO:0007669"/>
    <property type="project" value="UniProtKB-SubCell"/>
</dbReference>
<dbReference type="GO" id="GO:0008270">
    <property type="term" value="F:zinc ion binding"/>
    <property type="evidence" value="ECO:0007669"/>
    <property type="project" value="UniProtKB-KW"/>
</dbReference>
<dbReference type="GO" id="GO:0010158">
    <property type="term" value="P:abaxial cell fate specification"/>
    <property type="evidence" value="ECO:0007669"/>
    <property type="project" value="TreeGrafter"/>
</dbReference>
<dbReference type="GO" id="GO:0010154">
    <property type="term" value="P:fruit development"/>
    <property type="evidence" value="ECO:0007669"/>
    <property type="project" value="TreeGrafter"/>
</dbReference>
<dbReference type="GO" id="GO:0009944">
    <property type="term" value="P:polarity specification of adaxial/abaxial axis"/>
    <property type="evidence" value="ECO:0007669"/>
    <property type="project" value="TreeGrafter"/>
</dbReference>
<dbReference type="GO" id="GO:2000024">
    <property type="term" value="P:regulation of leaf development"/>
    <property type="evidence" value="ECO:0007669"/>
    <property type="project" value="TreeGrafter"/>
</dbReference>
<dbReference type="GO" id="GO:1902183">
    <property type="term" value="P:regulation of shoot apical meristem development"/>
    <property type="evidence" value="ECO:0007669"/>
    <property type="project" value="TreeGrafter"/>
</dbReference>
<dbReference type="CDD" id="cd00084">
    <property type="entry name" value="HMG-box_SF"/>
    <property type="match status" value="1"/>
</dbReference>
<dbReference type="FunFam" id="1.10.30.10:FF:000012">
    <property type="entry name" value="axial regulator YABBY 5-like"/>
    <property type="match status" value="1"/>
</dbReference>
<dbReference type="Gene3D" id="1.10.30.10">
    <property type="entry name" value="High mobility group box domain"/>
    <property type="match status" value="1"/>
</dbReference>
<dbReference type="InterPro" id="IPR036910">
    <property type="entry name" value="HMG_box_dom_sf"/>
</dbReference>
<dbReference type="InterPro" id="IPR006780">
    <property type="entry name" value="YABBY"/>
</dbReference>
<dbReference type="InterPro" id="IPR056775">
    <property type="entry name" value="YABBY_C"/>
</dbReference>
<dbReference type="InterPro" id="IPR056776">
    <property type="entry name" value="YABBY_N"/>
</dbReference>
<dbReference type="PANTHER" id="PTHR31675:SF50">
    <property type="entry name" value="PROTEIN YABBY 5"/>
    <property type="match status" value="1"/>
</dbReference>
<dbReference type="PANTHER" id="PTHR31675">
    <property type="entry name" value="PROTEIN YABBY 6-RELATED"/>
    <property type="match status" value="1"/>
</dbReference>
<dbReference type="Pfam" id="PF04690">
    <property type="entry name" value="YABBY"/>
    <property type="match status" value="1"/>
</dbReference>
<dbReference type="Pfam" id="PF24868">
    <property type="entry name" value="YABBY_N"/>
    <property type="match status" value="1"/>
</dbReference>
<dbReference type="SUPFAM" id="SSF47095">
    <property type="entry name" value="HMG-box"/>
    <property type="match status" value="1"/>
</dbReference>
<proteinExistence type="inferred from homology"/>
<keyword id="KW-0221">Differentiation</keyword>
<keyword id="KW-0479">Metal-binding</keyword>
<keyword id="KW-0539">Nucleus</keyword>
<keyword id="KW-1185">Reference proteome</keyword>
<keyword id="KW-0862">Zinc</keyword>
<keyword id="KW-0863">Zinc-finger</keyword>
<organism>
    <name type="scientific">Oryza sativa subsp. indica</name>
    <name type="common">Rice</name>
    <dbReference type="NCBI Taxonomy" id="39946"/>
    <lineage>
        <taxon>Eukaryota</taxon>
        <taxon>Viridiplantae</taxon>
        <taxon>Streptophyta</taxon>
        <taxon>Embryophyta</taxon>
        <taxon>Tracheophyta</taxon>
        <taxon>Spermatophyta</taxon>
        <taxon>Magnoliopsida</taxon>
        <taxon>Liliopsida</taxon>
        <taxon>Poales</taxon>
        <taxon>Poaceae</taxon>
        <taxon>BOP clade</taxon>
        <taxon>Oryzoideae</taxon>
        <taxon>Oryzeae</taxon>
        <taxon>Oryzinae</taxon>
        <taxon>Oryza</taxon>
        <taxon>Oryza sativa</taxon>
    </lineage>
</organism>
<name>YAB5_ORYSI</name>
<comment type="function">
    <text evidence="1">May be involved in leaf cell growth and differentiation, rather than abaxial cell fate determination.</text>
</comment>
<comment type="subcellular location">
    <subcellularLocation>
        <location evidence="1">Nucleus</location>
    </subcellularLocation>
</comment>
<comment type="similarity">
    <text evidence="3">Belongs to the YABBY family.</text>
</comment>
<comment type="sequence caution" evidence="3">
    <conflict type="erroneous initiation">
        <sequence resource="EMBL-CDS" id="CAH67113"/>
    </conflict>
</comment>
<comment type="sequence caution" evidence="3">
    <conflict type="erroneous initiation">
        <sequence resource="EMBL-CDS" id="EAY94977"/>
    </conflict>
</comment>